<accession>P51961</accession>
<proteinExistence type="evidence at protein level"/>
<gene>
    <name evidence="5" type="primary">ribE</name>
    <name evidence="5" type="synonym">ribI</name>
</gene>
<name>RISA_PHOPO</name>
<protein>
    <recommendedName>
        <fullName evidence="5">Riboflavin synthase</fullName>
        <shortName evidence="6">RS</shortName>
        <ecNumber evidence="4">2.5.1.9</ecNumber>
    </recommendedName>
</protein>
<dbReference type="EC" id="2.5.1.9" evidence="4"/>
<dbReference type="EMBL" id="L11391">
    <property type="protein sequence ID" value="AAA25628.1"/>
    <property type="molecule type" value="Genomic_DNA"/>
</dbReference>
<dbReference type="SMR" id="P51961"/>
<dbReference type="UniPathway" id="UPA00275">
    <property type="reaction ID" value="UER00405"/>
</dbReference>
<dbReference type="GO" id="GO:0004746">
    <property type="term" value="F:riboflavin synthase activity"/>
    <property type="evidence" value="ECO:0007669"/>
    <property type="project" value="UniProtKB-EC"/>
</dbReference>
<dbReference type="GO" id="GO:0009231">
    <property type="term" value="P:riboflavin biosynthetic process"/>
    <property type="evidence" value="ECO:0007669"/>
    <property type="project" value="UniProtKB-UniPathway"/>
</dbReference>
<dbReference type="CDD" id="cd00402">
    <property type="entry name" value="Riboflavin_synthase_like"/>
    <property type="match status" value="1"/>
</dbReference>
<dbReference type="FunFam" id="2.40.30.20:FF:000003">
    <property type="entry name" value="Riboflavin synthase, alpha subunit"/>
    <property type="match status" value="1"/>
</dbReference>
<dbReference type="FunFam" id="2.40.30.20:FF:000004">
    <property type="entry name" value="Riboflavin synthase, alpha subunit"/>
    <property type="match status" value="1"/>
</dbReference>
<dbReference type="Gene3D" id="2.40.30.20">
    <property type="match status" value="2"/>
</dbReference>
<dbReference type="InterPro" id="IPR023366">
    <property type="entry name" value="ATP_synth_asu-like_sf"/>
</dbReference>
<dbReference type="InterPro" id="IPR001783">
    <property type="entry name" value="Lumazine-bd"/>
</dbReference>
<dbReference type="InterPro" id="IPR026017">
    <property type="entry name" value="Lumazine-bd_dom"/>
</dbReference>
<dbReference type="InterPro" id="IPR017938">
    <property type="entry name" value="Riboflavin_synthase-like_b-brl"/>
</dbReference>
<dbReference type="NCBIfam" id="NF006767">
    <property type="entry name" value="PRK09289.1"/>
    <property type="match status" value="1"/>
</dbReference>
<dbReference type="NCBIfam" id="NF009566">
    <property type="entry name" value="PRK13020.1"/>
    <property type="match status" value="1"/>
</dbReference>
<dbReference type="NCBIfam" id="TIGR00187">
    <property type="entry name" value="ribE"/>
    <property type="match status" value="1"/>
</dbReference>
<dbReference type="PANTHER" id="PTHR21098:SF12">
    <property type="entry name" value="RIBOFLAVIN SYNTHASE"/>
    <property type="match status" value="1"/>
</dbReference>
<dbReference type="PANTHER" id="PTHR21098">
    <property type="entry name" value="RIBOFLAVIN SYNTHASE ALPHA CHAIN"/>
    <property type="match status" value="1"/>
</dbReference>
<dbReference type="Pfam" id="PF00677">
    <property type="entry name" value="Lum_binding"/>
    <property type="match status" value="2"/>
</dbReference>
<dbReference type="PIRSF" id="PIRSF000498">
    <property type="entry name" value="Riboflavin_syn_A"/>
    <property type="match status" value="1"/>
</dbReference>
<dbReference type="SUPFAM" id="SSF63380">
    <property type="entry name" value="Riboflavin synthase domain-like"/>
    <property type="match status" value="2"/>
</dbReference>
<dbReference type="PROSITE" id="PS51177">
    <property type="entry name" value="LUMAZINE_BIND"/>
    <property type="match status" value="2"/>
</dbReference>
<sequence length="218" mass="23639">MFTGIIEAVGNISAITSKGSDFEVSVNCDTLDLADVKIGDSIATNGICLTVVKLTANSYVADLSIETLSRTAFNYYKVGQAVNLEKAMLPTTRFGGHIVSGHVDAVAEVIECRTSGRAIDIWIRVPSQIEKYLSEKGSVTVDGVSLTVNAVTGNEFKLTIVPHTVVETTIADFKVGNKVNIEVDVLARYIERLLLVDKPEDKQSKISMDLLERNGFLL</sequence>
<feature type="chain" id="PRO_0000068171" description="Riboflavin synthase">
    <location>
        <begin position="1"/>
        <end position="218"/>
    </location>
</feature>
<feature type="repeat" description="Lumazine-binding 1" evidence="3">
    <location>
        <begin position="1"/>
        <end position="97"/>
    </location>
</feature>
<feature type="repeat" description="Lumazine-binding 2" evidence="3">
    <location>
        <begin position="98"/>
        <end position="194"/>
    </location>
</feature>
<feature type="binding site" evidence="2">
    <location>
        <begin position="4"/>
        <end position="6"/>
    </location>
    <ligand>
        <name>2,4-dihydroxypteridine</name>
        <dbReference type="ChEBI" id="CHEBI:16489"/>
        <label>1</label>
    </ligand>
</feature>
<feature type="binding site" evidence="2">
    <location>
        <begin position="48"/>
        <end position="50"/>
    </location>
    <ligand>
        <name>2,4-dihydroxypteridine</name>
        <dbReference type="ChEBI" id="CHEBI:16489"/>
        <label>2</label>
        <note>ligand shared between two trimeric partners</note>
    </ligand>
</feature>
<feature type="binding site" evidence="1">
    <location>
        <begin position="62"/>
        <end position="67"/>
    </location>
    <ligand>
        <name>2,4-dihydroxypteridine</name>
        <dbReference type="ChEBI" id="CHEBI:16489"/>
        <label>2</label>
        <note>ligand shared between two trimeric partners</note>
    </ligand>
</feature>
<feature type="binding site" evidence="2">
    <location>
        <begin position="101"/>
        <end position="103"/>
    </location>
    <ligand>
        <name>2,4-dihydroxypteridine</name>
        <dbReference type="ChEBI" id="CHEBI:16489"/>
        <label>2</label>
        <note>ligand shared between two trimeric partners</note>
    </ligand>
</feature>
<feature type="binding site" description="in other chain" evidence="2">
    <location>
        <position position="136"/>
    </location>
    <ligand>
        <name>2,4-dihydroxypteridine</name>
        <dbReference type="ChEBI" id="CHEBI:16489"/>
        <label>2</label>
        <note>ligand shared between two trimeric partners</note>
    </ligand>
</feature>
<feature type="binding site" evidence="2">
    <location>
        <begin position="145"/>
        <end position="147"/>
    </location>
    <ligand>
        <name>2,4-dihydroxypteridine</name>
        <dbReference type="ChEBI" id="CHEBI:16489"/>
        <label>1</label>
    </ligand>
</feature>
<feature type="binding site" evidence="2">
    <location>
        <begin position="159"/>
        <end position="164"/>
    </location>
    <ligand>
        <name>2,4-dihydroxypteridine</name>
        <dbReference type="ChEBI" id="CHEBI:16489"/>
        <label>1</label>
    </ligand>
</feature>
<organism>
    <name type="scientific">Photobacterium phosphoreum</name>
    <dbReference type="NCBI Taxonomy" id="659"/>
    <lineage>
        <taxon>Bacteria</taxon>
        <taxon>Pseudomonadati</taxon>
        <taxon>Pseudomonadota</taxon>
        <taxon>Gammaproteobacteria</taxon>
        <taxon>Vibrionales</taxon>
        <taxon>Vibrionaceae</taxon>
        <taxon>Photobacterium</taxon>
    </lineage>
</organism>
<evidence type="ECO:0000250" key="1">
    <source>
        <dbReference type="UniProtKB" id="P0AFU8"/>
    </source>
</evidence>
<evidence type="ECO:0000250" key="2">
    <source>
        <dbReference type="UniProtKB" id="Q2YN92"/>
    </source>
</evidence>
<evidence type="ECO:0000255" key="3">
    <source>
        <dbReference type="PROSITE-ProRule" id="PRU00524"/>
    </source>
</evidence>
<evidence type="ECO:0000269" key="4">
    <source>
    </source>
</evidence>
<evidence type="ECO:0000303" key="5">
    <source>
    </source>
</evidence>
<evidence type="ECO:0000305" key="6"/>
<comment type="function">
    <text evidence="4">Catalyzes the dismutation of two molecules of 6,7-dimethyl-8-ribityllumazine, resulting in the formation of riboflavin and 5-amino-6-(D-ribitylamino)uracil.</text>
</comment>
<comment type="catalytic activity">
    <reaction evidence="4">
        <text>2 6,7-dimethyl-8-(1-D-ribityl)lumazine + H(+) = 5-amino-6-(D-ribitylamino)uracil + riboflavin</text>
        <dbReference type="Rhea" id="RHEA:20772"/>
        <dbReference type="ChEBI" id="CHEBI:15378"/>
        <dbReference type="ChEBI" id="CHEBI:15934"/>
        <dbReference type="ChEBI" id="CHEBI:57986"/>
        <dbReference type="ChEBI" id="CHEBI:58201"/>
        <dbReference type="EC" id="2.5.1.9"/>
    </reaction>
</comment>
<comment type="pathway">
    <text evidence="4">Cofactor biosynthesis; riboflavin biosynthesis; riboflavin from 2-hydroxy-3-oxobutyl phosphate and 5-amino-6-(D-ribitylamino)uracil: step 2/2.</text>
</comment>
<comment type="subunit">
    <text evidence="2">Homotrimer.</text>
</comment>
<keyword id="KW-0677">Repeat</keyword>
<keyword id="KW-0686">Riboflavin biosynthesis</keyword>
<keyword id="KW-0808">Transferase</keyword>
<reference key="1">
    <citation type="journal article" date="1994" name="J. Bacteriol.">
        <title>Riboflavin synthesis genes are linked with the lux operon of Photobacterium phosphoreum.</title>
        <authorList>
            <person name="Lee C.Y."/>
            <person name="O'Kane D.J."/>
            <person name="Meighen E.A."/>
        </authorList>
    </citation>
    <scope>NUCLEOTIDE SEQUENCE [GENOMIC DNA]</scope>
    <scope>FUNCTION</scope>
    <scope>CATALYTIC ACTIVITY</scope>
    <scope>PATHWAY</scope>
    <source>
        <strain>DSM 2167 / CIP 104260 / LMG 4231 / NCIMB 844</strain>
    </source>
</reference>